<comment type="function">
    <text evidence="1">Catalyzes the 1,3-allylic rearrangement of the homoallylic substrate isopentenyl (IPP) to its highly electrophilic allylic isomer, dimethylallyl diphosphate (DMAPP).</text>
</comment>
<comment type="catalytic activity">
    <reaction evidence="1">
        <text>isopentenyl diphosphate = dimethylallyl diphosphate</text>
        <dbReference type="Rhea" id="RHEA:23284"/>
        <dbReference type="ChEBI" id="CHEBI:57623"/>
        <dbReference type="ChEBI" id="CHEBI:128769"/>
        <dbReference type="EC" id="5.3.3.2"/>
    </reaction>
</comment>
<comment type="cofactor">
    <cofactor evidence="1">
        <name>Mg(2+)</name>
        <dbReference type="ChEBI" id="CHEBI:18420"/>
    </cofactor>
    <text evidence="1">Binds 1 Mg(2+) ion per subunit. The magnesium ion binds only when substrate is bound.</text>
</comment>
<comment type="cofactor">
    <cofactor evidence="1">
        <name>Mn(2+)</name>
        <dbReference type="ChEBI" id="CHEBI:29035"/>
    </cofactor>
    <text evidence="1">Binds 1 Mn(2+) ion per subunit.</text>
</comment>
<comment type="pathway">
    <text evidence="1">Isoprenoid biosynthesis; dimethylallyl diphosphate biosynthesis; dimethylallyl diphosphate from isopentenyl diphosphate: step 1/1.</text>
</comment>
<comment type="subunit">
    <text evidence="1">Homodimer.</text>
</comment>
<comment type="subcellular location">
    <subcellularLocation>
        <location evidence="1">Cytoplasm</location>
    </subcellularLocation>
</comment>
<comment type="similarity">
    <text evidence="1">Belongs to the IPP isomerase type 1 family.</text>
</comment>
<organism>
    <name type="scientific">Klebsiella pneumoniae subsp. pneumoniae (strain ATCC 700721 / MGH 78578)</name>
    <dbReference type="NCBI Taxonomy" id="272620"/>
    <lineage>
        <taxon>Bacteria</taxon>
        <taxon>Pseudomonadati</taxon>
        <taxon>Pseudomonadota</taxon>
        <taxon>Gammaproteobacteria</taxon>
        <taxon>Enterobacterales</taxon>
        <taxon>Enterobacteriaceae</taxon>
        <taxon>Klebsiella/Raoultella group</taxon>
        <taxon>Klebsiella</taxon>
        <taxon>Klebsiella pneumoniae complex</taxon>
    </lineage>
</organism>
<evidence type="ECO:0000255" key="1">
    <source>
        <dbReference type="HAMAP-Rule" id="MF_00202"/>
    </source>
</evidence>
<dbReference type="EC" id="5.3.3.2" evidence="1"/>
<dbReference type="EMBL" id="CP000647">
    <property type="protein sequence ID" value="ABR78714.1"/>
    <property type="molecule type" value="Genomic_DNA"/>
</dbReference>
<dbReference type="RefSeq" id="WP_002916298.1">
    <property type="nucleotide sequence ID" value="NC_009648.1"/>
</dbReference>
<dbReference type="SMR" id="A6TDP3"/>
<dbReference type="STRING" id="272620.KPN_03317"/>
<dbReference type="PaxDb" id="272620-KPN_03317"/>
<dbReference type="EnsemblBacteria" id="ABR78714">
    <property type="protein sequence ID" value="ABR78714"/>
    <property type="gene ID" value="KPN_03317"/>
</dbReference>
<dbReference type="KEGG" id="kpn:KPN_03317"/>
<dbReference type="HOGENOM" id="CLU_060552_2_0_6"/>
<dbReference type="UniPathway" id="UPA00059">
    <property type="reaction ID" value="UER00104"/>
</dbReference>
<dbReference type="Proteomes" id="UP000000265">
    <property type="component" value="Chromosome"/>
</dbReference>
<dbReference type="GO" id="GO:0005737">
    <property type="term" value="C:cytoplasm"/>
    <property type="evidence" value="ECO:0007669"/>
    <property type="project" value="UniProtKB-SubCell"/>
</dbReference>
<dbReference type="GO" id="GO:0004452">
    <property type="term" value="F:isopentenyl-diphosphate delta-isomerase activity"/>
    <property type="evidence" value="ECO:0007669"/>
    <property type="project" value="UniProtKB-UniRule"/>
</dbReference>
<dbReference type="GO" id="GO:0046872">
    <property type="term" value="F:metal ion binding"/>
    <property type="evidence" value="ECO:0007669"/>
    <property type="project" value="UniProtKB-KW"/>
</dbReference>
<dbReference type="GO" id="GO:0050992">
    <property type="term" value="P:dimethylallyl diphosphate biosynthetic process"/>
    <property type="evidence" value="ECO:0007669"/>
    <property type="project" value="UniProtKB-UniRule"/>
</dbReference>
<dbReference type="GO" id="GO:0008299">
    <property type="term" value="P:isoprenoid biosynthetic process"/>
    <property type="evidence" value="ECO:0007669"/>
    <property type="project" value="UniProtKB-KW"/>
</dbReference>
<dbReference type="CDD" id="cd02885">
    <property type="entry name" value="NUDIX_IPP_Isomerase"/>
    <property type="match status" value="1"/>
</dbReference>
<dbReference type="FunFam" id="3.90.79.10:FF:000009">
    <property type="entry name" value="Isopentenyl-diphosphate Delta-isomerase"/>
    <property type="match status" value="1"/>
</dbReference>
<dbReference type="Gene3D" id="3.90.79.10">
    <property type="entry name" value="Nucleoside Triphosphate Pyrophosphohydrolase"/>
    <property type="match status" value="1"/>
</dbReference>
<dbReference type="HAMAP" id="MF_00202">
    <property type="entry name" value="Idi"/>
    <property type="match status" value="1"/>
</dbReference>
<dbReference type="InterPro" id="IPR056375">
    <property type="entry name" value="Idi_bact"/>
</dbReference>
<dbReference type="InterPro" id="IPR011876">
    <property type="entry name" value="IsopentenylPP_isomerase_typ1"/>
</dbReference>
<dbReference type="InterPro" id="IPR015797">
    <property type="entry name" value="NUDIX_hydrolase-like_dom_sf"/>
</dbReference>
<dbReference type="InterPro" id="IPR000086">
    <property type="entry name" value="NUDIX_hydrolase_dom"/>
</dbReference>
<dbReference type="NCBIfam" id="TIGR02150">
    <property type="entry name" value="IPP_isom_1"/>
    <property type="match status" value="1"/>
</dbReference>
<dbReference type="NCBIfam" id="NF002995">
    <property type="entry name" value="PRK03759.1"/>
    <property type="match status" value="1"/>
</dbReference>
<dbReference type="PANTHER" id="PTHR10885">
    <property type="entry name" value="ISOPENTENYL-DIPHOSPHATE DELTA-ISOMERASE"/>
    <property type="match status" value="1"/>
</dbReference>
<dbReference type="PANTHER" id="PTHR10885:SF0">
    <property type="entry name" value="ISOPENTENYL-DIPHOSPHATE DELTA-ISOMERASE"/>
    <property type="match status" value="1"/>
</dbReference>
<dbReference type="Pfam" id="PF00293">
    <property type="entry name" value="NUDIX"/>
    <property type="match status" value="1"/>
</dbReference>
<dbReference type="PIRSF" id="PIRSF018427">
    <property type="entry name" value="Isopntndiph_ism"/>
    <property type="match status" value="1"/>
</dbReference>
<dbReference type="SUPFAM" id="SSF55811">
    <property type="entry name" value="Nudix"/>
    <property type="match status" value="1"/>
</dbReference>
<dbReference type="PROSITE" id="PS51462">
    <property type="entry name" value="NUDIX"/>
    <property type="match status" value="1"/>
</dbReference>
<protein>
    <recommendedName>
        <fullName evidence="1">Isopentenyl-diphosphate Delta-isomerase</fullName>
        <shortName evidence="1">IPP isomerase</shortName>
        <ecNumber evidence="1">5.3.3.2</ecNumber>
    </recommendedName>
    <alternativeName>
        <fullName evidence="1">IPP:DMAPP isomerase</fullName>
    </alternativeName>
    <alternativeName>
        <fullName evidence="1">Isopentenyl pyrophosphate isomerase</fullName>
    </alternativeName>
</protein>
<accession>A6TDP3</accession>
<keyword id="KW-0963">Cytoplasm</keyword>
<keyword id="KW-0413">Isomerase</keyword>
<keyword id="KW-0414">Isoprene biosynthesis</keyword>
<keyword id="KW-0460">Magnesium</keyword>
<keyword id="KW-0464">Manganese</keyword>
<keyword id="KW-0479">Metal-binding</keyword>
<name>IDI_KLEP7</name>
<sequence>MAGEHVILLDEQDQPAGMLEKYAAHTFDTPLHLAFSCWLFNQQGQLLVTRRSLGKKAWPGVWTNSVCGHPQQGETFEQAVTRRCRFELGVEISDIAPVHPAFRYRAVAPNGIVENEVCPVYAARVVSEVQPNDDEVMDYQWVDLATMLSALAATPWAFSPWMVLEAENRDARQALTDFVARLRG</sequence>
<reference key="1">
    <citation type="submission" date="2006-09" db="EMBL/GenBank/DDBJ databases">
        <authorList>
            <consortium name="The Klebsiella pneumonia Genome Sequencing Project"/>
            <person name="McClelland M."/>
            <person name="Sanderson E.K."/>
            <person name="Spieth J."/>
            <person name="Clifton W.S."/>
            <person name="Latreille P."/>
            <person name="Sabo A."/>
            <person name="Pepin K."/>
            <person name="Bhonagiri V."/>
            <person name="Porwollik S."/>
            <person name="Ali J."/>
            <person name="Wilson R.K."/>
        </authorList>
    </citation>
    <scope>NUCLEOTIDE SEQUENCE [LARGE SCALE GENOMIC DNA]</scope>
    <source>
        <strain>ATCC 700721 / MGH 78578</strain>
    </source>
</reference>
<gene>
    <name evidence="1" type="primary">idi</name>
    <name type="ordered locus">KPN78578_32530</name>
    <name type="ORF">KPN_03317</name>
</gene>
<proteinExistence type="inferred from homology"/>
<feature type="chain" id="PRO_1000012173" description="Isopentenyl-diphosphate Delta-isomerase">
    <location>
        <begin position="1"/>
        <end position="184"/>
    </location>
</feature>
<feature type="domain" description="Nudix hydrolase">
    <location>
        <begin position="30"/>
        <end position="164"/>
    </location>
</feature>
<feature type="active site" evidence="1">
    <location>
        <position position="67"/>
    </location>
</feature>
<feature type="active site" evidence="1">
    <location>
        <position position="116"/>
    </location>
</feature>
<feature type="binding site" evidence="1">
    <location>
        <position position="25"/>
    </location>
    <ligand>
        <name>Mn(2+)</name>
        <dbReference type="ChEBI" id="CHEBI:29035"/>
    </ligand>
</feature>
<feature type="binding site" evidence="1">
    <location>
        <position position="32"/>
    </location>
    <ligand>
        <name>Mn(2+)</name>
        <dbReference type="ChEBI" id="CHEBI:29035"/>
    </ligand>
</feature>
<feature type="binding site" evidence="1">
    <location>
        <position position="69"/>
    </location>
    <ligand>
        <name>Mn(2+)</name>
        <dbReference type="ChEBI" id="CHEBI:29035"/>
    </ligand>
</feature>
<feature type="binding site" evidence="1">
    <location>
        <position position="87"/>
    </location>
    <ligand>
        <name>Mg(2+)</name>
        <dbReference type="ChEBI" id="CHEBI:18420"/>
    </ligand>
</feature>
<feature type="binding site" evidence="1">
    <location>
        <position position="114"/>
    </location>
    <ligand>
        <name>Mn(2+)</name>
        <dbReference type="ChEBI" id="CHEBI:29035"/>
    </ligand>
</feature>
<feature type="binding site" evidence="1">
    <location>
        <position position="116"/>
    </location>
    <ligand>
        <name>Mn(2+)</name>
        <dbReference type="ChEBI" id="CHEBI:29035"/>
    </ligand>
</feature>